<evidence type="ECO:0000255" key="1">
    <source>
        <dbReference type="HAMAP-Rule" id="MF_00167"/>
    </source>
</evidence>
<evidence type="ECO:0000256" key="2">
    <source>
        <dbReference type="SAM" id="MobiDB-lite"/>
    </source>
</evidence>
<keyword id="KW-0010">Activator</keyword>
<keyword id="KW-0963">Cytoplasm</keyword>
<keyword id="KW-0678">Repressor</keyword>
<keyword id="KW-0694">RNA-binding</keyword>
<keyword id="KW-0810">Translation regulation</keyword>
<proteinExistence type="inferred from homology"/>
<gene>
    <name evidence="1" type="primary">csrA</name>
    <name type="ordered locus">HDEF_0013</name>
</gene>
<accession>C4K832</accession>
<sequence>MLILTRRVGETLIIEDNITVTVLGVKGNQVRIGINAPKEVAVHREEIYNRIQADKKDERNERNDKYEKKYQNEDACDK</sequence>
<protein>
    <recommendedName>
        <fullName evidence="1">Translational regulator CsrA</fullName>
    </recommendedName>
    <alternativeName>
        <fullName evidence="1">Carbon storage regulator</fullName>
    </alternativeName>
</protein>
<feature type="chain" id="PRO_1000203645" description="Translational regulator CsrA">
    <location>
        <begin position="1"/>
        <end position="78"/>
    </location>
</feature>
<feature type="region of interest" description="Disordered" evidence="2">
    <location>
        <begin position="53"/>
        <end position="78"/>
    </location>
</feature>
<comment type="function">
    <text evidence="1">A key translational regulator that binds mRNA to regulate translation initiation and/or mRNA stability. Mediates global changes in gene expression, shifting from rapid growth to stress survival by linking envelope stress, the stringent response and the catabolite repression systems. Usually binds in the 5'-UTR; binding at or near the Shine-Dalgarno sequence prevents ribosome-binding, repressing translation, binding elsewhere in the 5'-UTR can activate translation and/or stabilize the mRNA. Its function is antagonized by small RNA(s).</text>
</comment>
<comment type="subunit">
    <text evidence="1">Homodimer; the beta-strands of each monomer intercalate to form a hydrophobic core, while the alpha-helices form wings that extend away from the core.</text>
</comment>
<comment type="subcellular location">
    <subcellularLocation>
        <location evidence="1">Cytoplasm</location>
    </subcellularLocation>
</comment>
<comment type="similarity">
    <text evidence="1">Belongs to the CsrA/RsmA family.</text>
</comment>
<name>CSRA_HAMD5</name>
<dbReference type="EMBL" id="CP001277">
    <property type="protein sequence ID" value="ACQ66792.1"/>
    <property type="molecule type" value="Genomic_DNA"/>
</dbReference>
<dbReference type="SMR" id="C4K832"/>
<dbReference type="STRING" id="572265.HDEF_0013"/>
<dbReference type="KEGG" id="hde:HDEF_0013"/>
<dbReference type="eggNOG" id="COG1551">
    <property type="taxonomic scope" value="Bacteria"/>
</dbReference>
<dbReference type="HOGENOM" id="CLU_164837_2_2_6"/>
<dbReference type="Proteomes" id="UP000002334">
    <property type="component" value="Chromosome"/>
</dbReference>
<dbReference type="GO" id="GO:0005829">
    <property type="term" value="C:cytosol"/>
    <property type="evidence" value="ECO:0007669"/>
    <property type="project" value="TreeGrafter"/>
</dbReference>
<dbReference type="GO" id="GO:0048027">
    <property type="term" value="F:mRNA 5'-UTR binding"/>
    <property type="evidence" value="ECO:0007669"/>
    <property type="project" value="UniProtKB-UniRule"/>
</dbReference>
<dbReference type="GO" id="GO:0006402">
    <property type="term" value="P:mRNA catabolic process"/>
    <property type="evidence" value="ECO:0007669"/>
    <property type="project" value="InterPro"/>
</dbReference>
<dbReference type="GO" id="GO:0045947">
    <property type="term" value="P:negative regulation of translational initiation"/>
    <property type="evidence" value="ECO:0007669"/>
    <property type="project" value="UniProtKB-UniRule"/>
</dbReference>
<dbReference type="GO" id="GO:0045948">
    <property type="term" value="P:positive regulation of translational initiation"/>
    <property type="evidence" value="ECO:0007669"/>
    <property type="project" value="UniProtKB-UniRule"/>
</dbReference>
<dbReference type="GO" id="GO:0006109">
    <property type="term" value="P:regulation of carbohydrate metabolic process"/>
    <property type="evidence" value="ECO:0007669"/>
    <property type="project" value="UniProtKB-UniRule"/>
</dbReference>
<dbReference type="FunFam" id="2.60.40.4380:FF:000001">
    <property type="entry name" value="Translational regulator CsrA"/>
    <property type="match status" value="1"/>
</dbReference>
<dbReference type="Gene3D" id="2.60.40.4380">
    <property type="entry name" value="Translational regulator CsrA"/>
    <property type="match status" value="1"/>
</dbReference>
<dbReference type="HAMAP" id="MF_00167">
    <property type="entry name" value="CsrA"/>
    <property type="match status" value="1"/>
</dbReference>
<dbReference type="InterPro" id="IPR003751">
    <property type="entry name" value="CsrA"/>
</dbReference>
<dbReference type="InterPro" id="IPR036107">
    <property type="entry name" value="CsrA_sf"/>
</dbReference>
<dbReference type="NCBIfam" id="TIGR00202">
    <property type="entry name" value="csrA"/>
    <property type="match status" value="1"/>
</dbReference>
<dbReference type="NCBIfam" id="NF002469">
    <property type="entry name" value="PRK01712.1"/>
    <property type="match status" value="1"/>
</dbReference>
<dbReference type="PANTHER" id="PTHR34984">
    <property type="entry name" value="CARBON STORAGE REGULATOR"/>
    <property type="match status" value="1"/>
</dbReference>
<dbReference type="PANTHER" id="PTHR34984:SF1">
    <property type="entry name" value="CARBON STORAGE REGULATOR"/>
    <property type="match status" value="1"/>
</dbReference>
<dbReference type="Pfam" id="PF02599">
    <property type="entry name" value="CsrA"/>
    <property type="match status" value="1"/>
</dbReference>
<dbReference type="SUPFAM" id="SSF117130">
    <property type="entry name" value="CsrA-like"/>
    <property type="match status" value="1"/>
</dbReference>
<reference key="1">
    <citation type="journal article" date="2009" name="Proc. Natl. Acad. Sci. U.S.A.">
        <title>Hamiltonella defensa, genome evolution of protective bacterial endosymbiont from pathogenic ancestors.</title>
        <authorList>
            <person name="Degnan P.H."/>
            <person name="Yu Y."/>
            <person name="Sisneros N."/>
            <person name="Wing R.A."/>
            <person name="Moran N.A."/>
        </authorList>
    </citation>
    <scope>NUCLEOTIDE SEQUENCE [LARGE SCALE GENOMIC DNA]</scope>
    <source>
        <strain>5AT</strain>
    </source>
</reference>
<organism>
    <name type="scientific">Hamiltonella defensa subsp. Acyrthosiphon pisum (strain 5AT)</name>
    <dbReference type="NCBI Taxonomy" id="572265"/>
    <lineage>
        <taxon>Bacteria</taxon>
        <taxon>Pseudomonadati</taxon>
        <taxon>Pseudomonadota</taxon>
        <taxon>Gammaproteobacteria</taxon>
        <taxon>Enterobacterales</taxon>
        <taxon>Enterobacteriaceae</taxon>
        <taxon>aphid secondary symbionts</taxon>
        <taxon>Candidatus Hamiltonella</taxon>
    </lineage>
</organism>